<comment type="function">
    <text evidence="1">One of the primary rRNA binding proteins, it binds directly to 16S rRNA where it nucleates assembly of the body of the 30S subunit.</text>
</comment>
<comment type="function">
    <text evidence="1">With S5 and S12 plays an important role in translational accuracy.</text>
</comment>
<comment type="subunit">
    <text evidence="1">Part of the 30S ribosomal subunit. Contacts protein S5. The interaction surface between S4 and S5 is involved in control of translational fidelity.</text>
</comment>
<comment type="similarity">
    <text evidence="1">Belongs to the universal ribosomal protein uS4 family.</text>
</comment>
<accession>Q4QM98</accession>
<keyword id="KW-0687">Ribonucleoprotein</keyword>
<keyword id="KW-0689">Ribosomal protein</keyword>
<keyword id="KW-0694">RNA-binding</keyword>
<keyword id="KW-0699">rRNA-binding</keyword>
<sequence length="206" mass="23494">MARYLGPKLKLSRREGTDLFLKSGVRAIDSKCKIDTAPGQHGARKPRLSDYGSQLREKQKVRRIYGILERQFRNYYKEANRLKGNTGENLLVLLEGRLDNVVYRMGFAATRAEARQLVSHKAIVVNGRVVNIPSFQVSVNDVVAIREKSKKQARIKASLELAEQREKPTWLEVDSAKMEGVFKRVPERSDLSADINEHLIVELYSK</sequence>
<evidence type="ECO:0000255" key="1">
    <source>
        <dbReference type="HAMAP-Rule" id="MF_01306"/>
    </source>
</evidence>
<evidence type="ECO:0000305" key="2"/>
<proteinExistence type="inferred from homology"/>
<feature type="chain" id="PRO_0000228897" description="Small ribosomal subunit protein uS4">
    <location>
        <begin position="1"/>
        <end position="206"/>
    </location>
</feature>
<feature type="domain" description="S4 RNA-binding" evidence="1">
    <location>
        <begin position="96"/>
        <end position="156"/>
    </location>
</feature>
<reference key="1">
    <citation type="journal article" date="2005" name="J. Bacteriol.">
        <title>Genomic sequence of an otitis media isolate of nontypeable Haemophilus influenzae: comparative study with H. influenzae serotype d, strain KW20.</title>
        <authorList>
            <person name="Harrison A."/>
            <person name="Dyer D.W."/>
            <person name="Gillaspy A."/>
            <person name="Ray W.C."/>
            <person name="Mungur R."/>
            <person name="Carson M.B."/>
            <person name="Zhong H."/>
            <person name="Gipson J."/>
            <person name="Gipson M."/>
            <person name="Johnson L.S."/>
            <person name="Lewis L."/>
            <person name="Bakaletz L.O."/>
            <person name="Munson R.S. Jr."/>
        </authorList>
    </citation>
    <scope>NUCLEOTIDE SEQUENCE [LARGE SCALE GENOMIC DNA]</scope>
    <source>
        <strain>86-028NP</strain>
    </source>
</reference>
<organism>
    <name type="scientific">Haemophilus influenzae (strain 86-028NP)</name>
    <dbReference type="NCBI Taxonomy" id="281310"/>
    <lineage>
        <taxon>Bacteria</taxon>
        <taxon>Pseudomonadati</taxon>
        <taxon>Pseudomonadota</taxon>
        <taxon>Gammaproteobacteria</taxon>
        <taxon>Pasteurellales</taxon>
        <taxon>Pasteurellaceae</taxon>
        <taxon>Haemophilus</taxon>
    </lineage>
</organism>
<name>RS4_HAEI8</name>
<gene>
    <name evidence="1" type="primary">rpsD</name>
    <name type="ordered locus">NTHI0964</name>
</gene>
<protein>
    <recommendedName>
        <fullName evidence="1">Small ribosomal subunit protein uS4</fullName>
    </recommendedName>
    <alternativeName>
        <fullName evidence="2">30S ribosomal protein S4</fullName>
    </alternativeName>
</protein>
<dbReference type="EMBL" id="CP000057">
    <property type="protein sequence ID" value="AAX87849.1"/>
    <property type="molecule type" value="Genomic_DNA"/>
</dbReference>
<dbReference type="RefSeq" id="WP_005648404.1">
    <property type="nucleotide sequence ID" value="NC_007146.2"/>
</dbReference>
<dbReference type="SMR" id="Q4QM98"/>
<dbReference type="GeneID" id="93219842"/>
<dbReference type="KEGG" id="hit:NTHI0964"/>
<dbReference type="HOGENOM" id="CLU_092403_0_2_6"/>
<dbReference type="Proteomes" id="UP000002525">
    <property type="component" value="Chromosome"/>
</dbReference>
<dbReference type="GO" id="GO:0015935">
    <property type="term" value="C:small ribosomal subunit"/>
    <property type="evidence" value="ECO:0007669"/>
    <property type="project" value="InterPro"/>
</dbReference>
<dbReference type="GO" id="GO:0019843">
    <property type="term" value="F:rRNA binding"/>
    <property type="evidence" value="ECO:0007669"/>
    <property type="project" value="UniProtKB-UniRule"/>
</dbReference>
<dbReference type="GO" id="GO:0003735">
    <property type="term" value="F:structural constituent of ribosome"/>
    <property type="evidence" value="ECO:0007669"/>
    <property type="project" value="InterPro"/>
</dbReference>
<dbReference type="GO" id="GO:0042274">
    <property type="term" value="P:ribosomal small subunit biogenesis"/>
    <property type="evidence" value="ECO:0007669"/>
    <property type="project" value="TreeGrafter"/>
</dbReference>
<dbReference type="GO" id="GO:0006412">
    <property type="term" value="P:translation"/>
    <property type="evidence" value="ECO:0007669"/>
    <property type="project" value="UniProtKB-UniRule"/>
</dbReference>
<dbReference type="CDD" id="cd00165">
    <property type="entry name" value="S4"/>
    <property type="match status" value="1"/>
</dbReference>
<dbReference type="FunFam" id="1.10.1050.10:FF:000001">
    <property type="entry name" value="30S ribosomal protein S4"/>
    <property type="match status" value="1"/>
</dbReference>
<dbReference type="FunFam" id="3.10.290.10:FF:000001">
    <property type="entry name" value="30S ribosomal protein S4"/>
    <property type="match status" value="1"/>
</dbReference>
<dbReference type="Gene3D" id="1.10.1050.10">
    <property type="entry name" value="Ribosomal Protein S4 Delta 41, Chain A, domain 1"/>
    <property type="match status" value="1"/>
</dbReference>
<dbReference type="Gene3D" id="3.10.290.10">
    <property type="entry name" value="RNA-binding S4 domain"/>
    <property type="match status" value="1"/>
</dbReference>
<dbReference type="HAMAP" id="MF_01306_B">
    <property type="entry name" value="Ribosomal_uS4_B"/>
    <property type="match status" value="1"/>
</dbReference>
<dbReference type="InterPro" id="IPR022801">
    <property type="entry name" value="Ribosomal_uS4"/>
</dbReference>
<dbReference type="InterPro" id="IPR005709">
    <property type="entry name" value="Ribosomal_uS4_bac-type"/>
</dbReference>
<dbReference type="InterPro" id="IPR018079">
    <property type="entry name" value="Ribosomal_uS4_CS"/>
</dbReference>
<dbReference type="InterPro" id="IPR001912">
    <property type="entry name" value="Ribosomal_uS4_N"/>
</dbReference>
<dbReference type="InterPro" id="IPR002942">
    <property type="entry name" value="S4_RNA-bd"/>
</dbReference>
<dbReference type="InterPro" id="IPR036986">
    <property type="entry name" value="S4_RNA-bd_sf"/>
</dbReference>
<dbReference type="NCBIfam" id="NF003717">
    <property type="entry name" value="PRK05327.1"/>
    <property type="match status" value="1"/>
</dbReference>
<dbReference type="NCBIfam" id="TIGR01017">
    <property type="entry name" value="rpsD_bact"/>
    <property type="match status" value="1"/>
</dbReference>
<dbReference type="PANTHER" id="PTHR11831">
    <property type="entry name" value="30S 40S RIBOSOMAL PROTEIN"/>
    <property type="match status" value="1"/>
</dbReference>
<dbReference type="PANTHER" id="PTHR11831:SF4">
    <property type="entry name" value="SMALL RIBOSOMAL SUBUNIT PROTEIN US4M"/>
    <property type="match status" value="1"/>
</dbReference>
<dbReference type="Pfam" id="PF00163">
    <property type="entry name" value="Ribosomal_S4"/>
    <property type="match status" value="1"/>
</dbReference>
<dbReference type="Pfam" id="PF01479">
    <property type="entry name" value="S4"/>
    <property type="match status" value="1"/>
</dbReference>
<dbReference type="SMART" id="SM01390">
    <property type="entry name" value="Ribosomal_S4"/>
    <property type="match status" value="1"/>
</dbReference>
<dbReference type="SMART" id="SM00363">
    <property type="entry name" value="S4"/>
    <property type="match status" value="1"/>
</dbReference>
<dbReference type="SUPFAM" id="SSF55174">
    <property type="entry name" value="Alpha-L RNA-binding motif"/>
    <property type="match status" value="1"/>
</dbReference>
<dbReference type="PROSITE" id="PS00632">
    <property type="entry name" value="RIBOSOMAL_S4"/>
    <property type="match status" value="1"/>
</dbReference>
<dbReference type="PROSITE" id="PS50889">
    <property type="entry name" value="S4"/>
    <property type="match status" value="1"/>
</dbReference>